<keyword id="KW-0240">DNA-directed RNA polymerase</keyword>
<keyword id="KW-0548">Nucleotidyltransferase</keyword>
<keyword id="KW-0804">Transcription</keyword>
<keyword id="KW-0808">Transferase</keyword>
<protein>
    <recommendedName>
        <fullName evidence="1">Probable DNA-directed RNA polymerase subunit delta</fullName>
    </recommendedName>
    <alternativeName>
        <fullName evidence="1">RNAP delta factor</fullName>
    </alternativeName>
</protein>
<proteinExistence type="inferred from homology"/>
<comment type="function">
    <text evidence="1">Participates in both the initiation and recycling phases of transcription. In the presence of the delta subunit, RNAP displays an increased specificity of transcription, a decreased affinity for nucleic acids, and an increased efficiency of RNA synthesis because of enhanced recycling.</text>
</comment>
<comment type="subunit">
    <text evidence="1">RNAP is composed of a core of 2 alpha, a beta and a beta' subunits. The core is associated with a delta subunit and one of several sigma factors.</text>
</comment>
<comment type="similarity">
    <text evidence="1">Belongs to the RpoE family.</text>
</comment>
<feature type="chain" id="PRO_0000303141" description="Probable DNA-directed RNA polymerase subunit delta">
    <location>
        <begin position="1"/>
        <end position="191"/>
    </location>
</feature>
<feature type="domain" description="HTH HARE-type" evidence="2">
    <location>
        <begin position="14"/>
        <end position="83"/>
    </location>
</feature>
<feature type="region of interest" description="Disordered" evidence="3">
    <location>
        <begin position="117"/>
        <end position="191"/>
    </location>
</feature>
<feature type="compositionally biased region" description="Acidic residues" evidence="3">
    <location>
        <begin position="117"/>
        <end position="136"/>
    </location>
</feature>
<feature type="compositionally biased region" description="Acidic residues" evidence="3">
    <location>
        <begin position="142"/>
        <end position="191"/>
    </location>
</feature>
<evidence type="ECO:0000255" key="1">
    <source>
        <dbReference type="HAMAP-Rule" id="MF_00357"/>
    </source>
</evidence>
<evidence type="ECO:0000255" key="2">
    <source>
        <dbReference type="PROSITE-ProRule" id="PRU01261"/>
    </source>
</evidence>
<evidence type="ECO:0000256" key="3">
    <source>
        <dbReference type="SAM" id="MobiDB-lite"/>
    </source>
</evidence>
<name>RPOE_STRA1</name>
<dbReference type="EMBL" id="CP000114">
    <property type="protein sequence ID" value="ABA44973.1"/>
    <property type="molecule type" value="Genomic_DNA"/>
</dbReference>
<dbReference type="RefSeq" id="WP_000418426.1">
    <property type="nucleotide sequence ID" value="NC_007432.1"/>
</dbReference>
<dbReference type="SMR" id="Q3K3S3"/>
<dbReference type="KEGG" id="sak:SAK_0156"/>
<dbReference type="HOGENOM" id="CLU_116648_0_0_9"/>
<dbReference type="GO" id="GO:0000428">
    <property type="term" value="C:DNA-directed RNA polymerase complex"/>
    <property type="evidence" value="ECO:0007669"/>
    <property type="project" value="UniProtKB-KW"/>
</dbReference>
<dbReference type="GO" id="GO:0003899">
    <property type="term" value="F:DNA-directed RNA polymerase activity"/>
    <property type="evidence" value="ECO:0007669"/>
    <property type="project" value="UniProtKB-UniRule"/>
</dbReference>
<dbReference type="GO" id="GO:0006351">
    <property type="term" value="P:DNA-templated transcription"/>
    <property type="evidence" value="ECO:0007669"/>
    <property type="project" value="InterPro"/>
</dbReference>
<dbReference type="GO" id="GO:0006355">
    <property type="term" value="P:regulation of DNA-templated transcription"/>
    <property type="evidence" value="ECO:0007669"/>
    <property type="project" value="UniProtKB-UniRule"/>
</dbReference>
<dbReference type="Gene3D" id="1.10.10.1250">
    <property type="entry name" value="RNA polymerase, subunit delta, N-terminal domain"/>
    <property type="match status" value="1"/>
</dbReference>
<dbReference type="HAMAP" id="MF_00357">
    <property type="entry name" value="RNApol_bact_RpoE"/>
    <property type="match status" value="1"/>
</dbReference>
<dbReference type="InterPro" id="IPR007759">
    <property type="entry name" value="Asxl_HARE-HTH"/>
</dbReference>
<dbReference type="InterPro" id="IPR038087">
    <property type="entry name" value="RNAP_delta_N_dom_sf"/>
</dbReference>
<dbReference type="InterPro" id="IPR029757">
    <property type="entry name" value="RpoE"/>
</dbReference>
<dbReference type="NCBIfam" id="TIGR04567">
    <property type="entry name" value="RNAP_delt_lowGC"/>
    <property type="match status" value="1"/>
</dbReference>
<dbReference type="Pfam" id="PF05066">
    <property type="entry name" value="HARE-HTH"/>
    <property type="match status" value="1"/>
</dbReference>
<dbReference type="PROSITE" id="PS51913">
    <property type="entry name" value="HTH_HARE"/>
    <property type="match status" value="1"/>
</dbReference>
<sequence length="191" mass="22227">MELEVFAGQEKSELSMIEVARAILEQRGRDNEMYFSDLVNDIQTYLGKSDSAIRESLPFFYSDLNTDGSFIPLGENKWGLRSWYAIDEIDEEIITLEEDEDGAPKRKKKRVNAFMDGDEDAIDYNDDDPEDEDFTEETPSLEYDEENPDDEKSEVESYDSEINEIIPDEDLDEDVEINEEDDEEEEEEEEV</sequence>
<accession>Q3K3S3</accession>
<organism>
    <name type="scientific">Streptococcus agalactiae serotype Ia (strain ATCC 27591 / A909 / CDC SS700)</name>
    <dbReference type="NCBI Taxonomy" id="205921"/>
    <lineage>
        <taxon>Bacteria</taxon>
        <taxon>Bacillati</taxon>
        <taxon>Bacillota</taxon>
        <taxon>Bacilli</taxon>
        <taxon>Lactobacillales</taxon>
        <taxon>Streptococcaceae</taxon>
        <taxon>Streptococcus</taxon>
    </lineage>
</organism>
<reference key="1">
    <citation type="journal article" date="2005" name="Proc. Natl. Acad. Sci. U.S.A.">
        <title>Genome analysis of multiple pathogenic isolates of Streptococcus agalactiae: implications for the microbial 'pan-genome'.</title>
        <authorList>
            <person name="Tettelin H."/>
            <person name="Masignani V."/>
            <person name="Cieslewicz M.J."/>
            <person name="Donati C."/>
            <person name="Medini D."/>
            <person name="Ward N.L."/>
            <person name="Angiuoli S.V."/>
            <person name="Crabtree J."/>
            <person name="Jones A.L."/>
            <person name="Durkin A.S."/>
            <person name="DeBoy R.T."/>
            <person name="Davidsen T.M."/>
            <person name="Mora M."/>
            <person name="Scarselli M."/>
            <person name="Margarit y Ros I."/>
            <person name="Peterson J.D."/>
            <person name="Hauser C.R."/>
            <person name="Sundaram J.P."/>
            <person name="Nelson W.C."/>
            <person name="Madupu R."/>
            <person name="Brinkac L.M."/>
            <person name="Dodson R.J."/>
            <person name="Rosovitz M.J."/>
            <person name="Sullivan S.A."/>
            <person name="Daugherty S.C."/>
            <person name="Haft D.H."/>
            <person name="Selengut J."/>
            <person name="Gwinn M.L."/>
            <person name="Zhou L."/>
            <person name="Zafar N."/>
            <person name="Khouri H."/>
            <person name="Radune D."/>
            <person name="Dimitrov G."/>
            <person name="Watkins K."/>
            <person name="O'Connor K.J."/>
            <person name="Smith S."/>
            <person name="Utterback T.R."/>
            <person name="White O."/>
            <person name="Rubens C.E."/>
            <person name="Grandi G."/>
            <person name="Madoff L.C."/>
            <person name="Kasper D.L."/>
            <person name="Telford J.L."/>
            <person name="Wessels M.R."/>
            <person name="Rappuoli R."/>
            <person name="Fraser C.M."/>
        </authorList>
    </citation>
    <scope>NUCLEOTIDE SEQUENCE [LARGE SCALE GENOMIC DNA]</scope>
    <source>
        <strain>ATCC 27591 / A909 / CDC SS700</strain>
    </source>
</reference>
<gene>
    <name evidence="1" type="primary">rpoE</name>
    <name type="ordered locus">SAK_0156</name>
</gene>